<sequence>MGRPVDKSVEQAFYFTKSPQTLVESGATVAYPPRTSNYHYEMELVLAIGKPGFRVSEDQAHELIYGYAAGLDMTRRDLQLVARDKGRPWDTGKDIEEGSVCSEIVPMQGVVVEQGAIALEVNGQTKQSSNVDKLIWNVREIIADLSTYYHLQPGDLIYTGTPEGVGAVVAGDKIIGRVEGIAEISLTVGPAE</sequence>
<dbReference type="EC" id="3.7.1.20"/>
<dbReference type="EMBL" id="AF036940">
    <property type="protein sequence ID" value="AAD12620.1"/>
    <property type="molecule type" value="Genomic_DNA"/>
</dbReference>
<dbReference type="SMR" id="O86042"/>
<dbReference type="KEGG" id="ag:AAD12620"/>
<dbReference type="BioCyc" id="MetaCyc:MONOMER-14771"/>
<dbReference type="BRENDA" id="3.7.1.20">
    <property type="organism ID" value="5275"/>
</dbReference>
<dbReference type="UniPathway" id="UPA00082"/>
<dbReference type="GO" id="GO:0018773">
    <property type="term" value="F:acetylpyruvate hydrolase activity"/>
    <property type="evidence" value="ECO:0007669"/>
    <property type="project" value="TreeGrafter"/>
</dbReference>
<dbReference type="GO" id="GO:0034545">
    <property type="term" value="F:fumarylpyruvate hydrolase activity"/>
    <property type="evidence" value="ECO:0000314"/>
    <property type="project" value="UniProtKB"/>
</dbReference>
<dbReference type="GO" id="GO:0016823">
    <property type="term" value="F:hydrolase activity, acting on acid carbon-carbon bonds, in ketonic substances"/>
    <property type="evidence" value="ECO:0000314"/>
    <property type="project" value="UniProtKB"/>
</dbReference>
<dbReference type="GO" id="GO:0046872">
    <property type="term" value="F:metal ion binding"/>
    <property type="evidence" value="ECO:0007669"/>
    <property type="project" value="UniProtKB-KW"/>
</dbReference>
<dbReference type="GO" id="GO:1901170">
    <property type="term" value="P:naphthalene catabolic process"/>
    <property type="evidence" value="ECO:0000314"/>
    <property type="project" value="UniProtKB"/>
</dbReference>
<dbReference type="Gene3D" id="3.90.850.10">
    <property type="entry name" value="Fumarylacetoacetase-like, C-terminal domain"/>
    <property type="match status" value="1"/>
</dbReference>
<dbReference type="InterPro" id="IPR011234">
    <property type="entry name" value="Fumarylacetoacetase-like_C"/>
</dbReference>
<dbReference type="InterPro" id="IPR036663">
    <property type="entry name" value="Fumarylacetoacetase_C_sf"/>
</dbReference>
<dbReference type="PANTHER" id="PTHR11820">
    <property type="entry name" value="ACYLPYRUVASE"/>
    <property type="match status" value="1"/>
</dbReference>
<dbReference type="PANTHER" id="PTHR11820:SF90">
    <property type="entry name" value="FLUTATHIONE S-TRANSFERASE"/>
    <property type="match status" value="1"/>
</dbReference>
<dbReference type="Pfam" id="PF01557">
    <property type="entry name" value="FAA_hydrolase"/>
    <property type="match status" value="1"/>
</dbReference>
<dbReference type="SUPFAM" id="SSF56529">
    <property type="entry name" value="FAH"/>
    <property type="match status" value="1"/>
</dbReference>
<reference evidence="4 5" key="1">
    <citation type="journal article" date="2001" name="J. Bacteriol.">
        <title>nag genes of Ralstonia (formerly Pseudomonas) sp. strain U2 encoding enzymes for gentisate catabolism.</title>
        <authorList>
            <person name="Zhou N.Y."/>
            <person name="Fuenmayor S.L."/>
            <person name="Williams P.A."/>
        </authorList>
    </citation>
    <scope>NUCLEOTIDE SEQUENCE [GENOMIC DNA]</scope>
    <scope>FUNCTION</scope>
    <scope>CATALYTIC ACTIVITY</scope>
    <scope>PATHWAY</scope>
    <source>
        <strain evidence="5">U2</strain>
    </source>
</reference>
<organism>
    <name type="scientific">Ralstonia sp</name>
    <dbReference type="NCBI Taxonomy" id="54061"/>
    <lineage>
        <taxon>Bacteria</taxon>
        <taxon>Pseudomonadati</taxon>
        <taxon>Pseudomonadota</taxon>
        <taxon>Betaproteobacteria</taxon>
        <taxon>Burkholderiales</taxon>
        <taxon>Burkholderiaceae</taxon>
        <taxon>Ralstonia</taxon>
    </lineage>
</organism>
<name>NAGK_RALSP</name>
<protein>
    <recommendedName>
        <fullName evidence="3 5">Fumarylpyruvate hydrolase</fullName>
        <ecNumber>3.7.1.20</ecNumber>
    </recommendedName>
    <alternativeName>
        <fullName>Naphthalene degradation protein K</fullName>
    </alternativeName>
</protein>
<feature type="chain" id="PRO_0000421468" description="Fumarylpyruvate hydrolase">
    <location>
        <begin position="1"/>
        <end position="192"/>
    </location>
</feature>
<feature type="binding site" evidence="1">
    <location>
        <position position="41"/>
    </location>
    <ligand>
        <name>a divalent metal cation</name>
        <dbReference type="ChEBI" id="CHEBI:60240"/>
    </ligand>
</feature>
<feature type="binding site" evidence="1">
    <location>
        <position position="43"/>
    </location>
    <ligand>
        <name>a divalent metal cation</name>
        <dbReference type="ChEBI" id="CHEBI:60240"/>
    </ligand>
</feature>
<feature type="binding site" evidence="1">
    <location>
        <position position="72"/>
    </location>
    <ligand>
        <name>a divalent metal cation</name>
        <dbReference type="ChEBI" id="CHEBI:60240"/>
    </ligand>
</feature>
<evidence type="ECO:0000250" key="1"/>
<evidence type="ECO:0000269" key="2">
    <source>
    </source>
</evidence>
<evidence type="ECO:0000303" key="3">
    <source>
    </source>
</evidence>
<evidence type="ECO:0000305" key="4"/>
<evidence type="ECO:0000312" key="5">
    <source>
        <dbReference type="EMBL" id="AAD12620.1"/>
    </source>
</evidence>
<proteinExistence type="evidence at protein level"/>
<gene>
    <name evidence="5" type="primary">nagK</name>
</gene>
<keyword id="KW-0058">Aromatic hydrocarbons catabolism</keyword>
<keyword id="KW-0378">Hydrolase</keyword>
<keyword id="KW-0479">Metal-binding</keyword>
<keyword id="KW-0614">Plasmid</keyword>
<keyword id="KW-0670">Pyruvate</keyword>
<comment type="function">
    <text evidence="2">Involved in the catabolism of gentisate (2,5-dihydroxybenzoate) a key intermediates in the aerobic pathways for the metabolism of a large number of aromatic compoun such as naphthalene. Catalyzes the hydrolytic cleavage of fumarylpyruvate to form fumarate and pyruvate.</text>
</comment>
<comment type="catalytic activity">
    <reaction evidence="2">
        <text>3-fumarylpyruvate + H2O = fumarate + pyruvate + H(+)</text>
        <dbReference type="Rhea" id="RHEA:26168"/>
        <dbReference type="ChEBI" id="CHEBI:15361"/>
        <dbReference type="ChEBI" id="CHEBI:15377"/>
        <dbReference type="ChEBI" id="CHEBI:15378"/>
        <dbReference type="ChEBI" id="CHEBI:16854"/>
        <dbReference type="ChEBI" id="CHEBI:29806"/>
        <dbReference type="EC" id="3.7.1.20"/>
    </reaction>
</comment>
<comment type="cofactor">
    <cofactor evidence="1">
        <name>Mg(2+)</name>
        <dbReference type="ChEBI" id="CHEBI:18420"/>
    </cofactor>
    <cofactor evidence="1">
        <name>Mn(2+)</name>
        <dbReference type="ChEBI" id="CHEBI:29035"/>
    </cofactor>
</comment>
<comment type="pathway">
    <text evidence="2">Aromatic compound metabolism; naphthalene degradation.</text>
</comment>
<comment type="similarity">
    <text evidence="4">Belongs to the FAH family.</text>
</comment>
<accession>O86042</accession>
<geneLocation type="plasmid" evidence="5">
    <name>pWWU2</name>
</geneLocation>